<feature type="chain" id="PRO_1000022262" description="Potassium-transporting ATPase KdpC subunit">
    <location>
        <begin position="1"/>
        <end position="193"/>
    </location>
</feature>
<feature type="transmembrane region" description="Helical" evidence="1">
    <location>
        <begin position="14"/>
        <end position="34"/>
    </location>
</feature>
<organism>
    <name type="scientific">Bacillus thuringiensis subsp. konkukian (strain 97-27)</name>
    <dbReference type="NCBI Taxonomy" id="281309"/>
    <lineage>
        <taxon>Bacteria</taxon>
        <taxon>Bacillati</taxon>
        <taxon>Bacillota</taxon>
        <taxon>Bacilli</taxon>
        <taxon>Bacillales</taxon>
        <taxon>Bacillaceae</taxon>
        <taxon>Bacillus</taxon>
        <taxon>Bacillus cereus group</taxon>
    </lineage>
</organism>
<reference key="1">
    <citation type="journal article" date="2006" name="J. Bacteriol.">
        <title>Pathogenomic sequence analysis of Bacillus cereus and Bacillus thuringiensis isolates closely related to Bacillus anthracis.</title>
        <authorList>
            <person name="Han C.S."/>
            <person name="Xie G."/>
            <person name="Challacombe J.F."/>
            <person name="Altherr M.R."/>
            <person name="Bhotika S.S."/>
            <person name="Bruce D."/>
            <person name="Campbell C.S."/>
            <person name="Campbell M.L."/>
            <person name="Chen J."/>
            <person name="Chertkov O."/>
            <person name="Cleland C."/>
            <person name="Dimitrijevic M."/>
            <person name="Doggett N.A."/>
            <person name="Fawcett J.J."/>
            <person name="Glavina T."/>
            <person name="Goodwin L.A."/>
            <person name="Hill K.K."/>
            <person name="Hitchcock P."/>
            <person name="Jackson P.J."/>
            <person name="Keim P."/>
            <person name="Kewalramani A.R."/>
            <person name="Longmire J."/>
            <person name="Lucas S."/>
            <person name="Malfatti S."/>
            <person name="McMurry K."/>
            <person name="Meincke L.J."/>
            <person name="Misra M."/>
            <person name="Moseman B.L."/>
            <person name="Mundt M."/>
            <person name="Munk A.C."/>
            <person name="Okinaka R.T."/>
            <person name="Parson-Quintana B."/>
            <person name="Reilly L.P."/>
            <person name="Richardson P."/>
            <person name="Robinson D.L."/>
            <person name="Rubin E."/>
            <person name="Saunders E."/>
            <person name="Tapia R."/>
            <person name="Tesmer J.G."/>
            <person name="Thayer N."/>
            <person name="Thompson L.S."/>
            <person name="Tice H."/>
            <person name="Ticknor L.O."/>
            <person name="Wills P.L."/>
            <person name="Brettin T.S."/>
            <person name="Gilna P."/>
        </authorList>
    </citation>
    <scope>NUCLEOTIDE SEQUENCE [LARGE SCALE GENOMIC DNA]</scope>
    <source>
        <strain>97-27</strain>
    </source>
</reference>
<comment type="function">
    <text evidence="1">Part of the high-affinity ATP-driven potassium transport (or Kdp) system, which catalyzes the hydrolysis of ATP coupled with the electrogenic transport of potassium into the cytoplasm. This subunit acts as a catalytic chaperone that increases the ATP-binding affinity of the ATP-hydrolyzing subunit KdpB by the formation of a transient KdpB/KdpC/ATP ternary complex.</text>
</comment>
<comment type="subunit">
    <text evidence="1">The system is composed of three essential subunits: KdpA, KdpB and KdpC.</text>
</comment>
<comment type="subcellular location">
    <subcellularLocation>
        <location evidence="1">Cell membrane</location>
        <topology evidence="1">Single-pass membrane protein</topology>
    </subcellularLocation>
</comment>
<comment type="similarity">
    <text evidence="1">Belongs to the KdpC family.</text>
</comment>
<name>KDPC_BACHK</name>
<sequence>MAKKQNILSPIIRITFTFLVLCGLVYPLIVTGIAQAVMKDNADGSLIYNDKNEVIGSTLIGQNFTDPRYFHGRVSSIEYKAEASGSNNYAPSNPDLEKRVEKSIEEWKKQNPSVPVTEVPIDLVTNSGSGLDPDISPKAASVQVERISKLTNIPKETLDQLIKDQTEGAALGLFGETRVNVLKLNLELQKIMK</sequence>
<proteinExistence type="inferred from homology"/>
<accession>Q6HN77</accession>
<keyword id="KW-0067">ATP-binding</keyword>
<keyword id="KW-1003">Cell membrane</keyword>
<keyword id="KW-0406">Ion transport</keyword>
<keyword id="KW-0472">Membrane</keyword>
<keyword id="KW-0547">Nucleotide-binding</keyword>
<keyword id="KW-0630">Potassium</keyword>
<keyword id="KW-0633">Potassium transport</keyword>
<keyword id="KW-0812">Transmembrane</keyword>
<keyword id="KW-1133">Transmembrane helix</keyword>
<keyword id="KW-0813">Transport</keyword>
<evidence type="ECO:0000255" key="1">
    <source>
        <dbReference type="HAMAP-Rule" id="MF_00276"/>
    </source>
</evidence>
<protein>
    <recommendedName>
        <fullName evidence="1">Potassium-transporting ATPase KdpC subunit</fullName>
    </recommendedName>
    <alternativeName>
        <fullName evidence="1">ATP phosphohydrolase [potassium-transporting] C chain</fullName>
    </alternativeName>
    <alternativeName>
        <fullName evidence="1">Potassium-binding and translocating subunit C</fullName>
    </alternativeName>
    <alternativeName>
        <fullName evidence="1">Potassium-translocating ATPase C chain</fullName>
    </alternativeName>
</protein>
<dbReference type="EMBL" id="AE017355">
    <property type="protein sequence ID" value="AAT62491.1"/>
    <property type="molecule type" value="Genomic_DNA"/>
</dbReference>
<dbReference type="RefSeq" id="WP_001085543.1">
    <property type="nucleotide sequence ID" value="NC_005957.1"/>
</dbReference>
<dbReference type="RefSeq" id="YP_034994.1">
    <property type="nucleotide sequence ID" value="NC_005957.1"/>
</dbReference>
<dbReference type="SMR" id="Q6HN77"/>
<dbReference type="KEGG" id="btk:BT9727_0649"/>
<dbReference type="PATRIC" id="fig|281309.8.peg.684"/>
<dbReference type="HOGENOM" id="CLU_077094_1_0_9"/>
<dbReference type="Proteomes" id="UP000001301">
    <property type="component" value="Chromosome"/>
</dbReference>
<dbReference type="GO" id="GO:0005886">
    <property type="term" value="C:plasma membrane"/>
    <property type="evidence" value="ECO:0007669"/>
    <property type="project" value="UniProtKB-SubCell"/>
</dbReference>
<dbReference type="GO" id="GO:0005524">
    <property type="term" value="F:ATP binding"/>
    <property type="evidence" value="ECO:0007669"/>
    <property type="project" value="UniProtKB-UniRule"/>
</dbReference>
<dbReference type="GO" id="GO:0008556">
    <property type="term" value="F:P-type potassium transmembrane transporter activity"/>
    <property type="evidence" value="ECO:0007669"/>
    <property type="project" value="InterPro"/>
</dbReference>
<dbReference type="HAMAP" id="MF_00276">
    <property type="entry name" value="KdpC"/>
    <property type="match status" value="1"/>
</dbReference>
<dbReference type="InterPro" id="IPR003820">
    <property type="entry name" value="KdpC"/>
</dbReference>
<dbReference type="NCBIfam" id="TIGR00681">
    <property type="entry name" value="kdpC"/>
    <property type="match status" value="1"/>
</dbReference>
<dbReference type="NCBIfam" id="NF001454">
    <property type="entry name" value="PRK00315.1"/>
    <property type="match status" value="1"/>
</dbReference>
<dbReference type="NCBIfam" id="NF010601">
    <property type="entry name" value="PRK13997.1"/>
    <property type="match status" value="1"/>
</dbReference>
<dbReference type="PANTHER" id="PTHR30042">
    <property type="entry name" value="POTASSIUM-TRANSPORTING ATPASE C CHAIN"/>
    <property type="match status" value="1"/>
</dbReference>
<dbReference type="PANTHER" id="PTHR30042:SF2">
    <property type="entry name" value="POTASSIUM-TRANSPORTING ATPASE KDPC SUBUNIT"/>
    <property type="match status" value="1"/>
</dbReference>
<dbReference type="Pfam" id="PF02669">
    <property type="entry name" value="KdpC"/>
    <property type="match status" value="1"/>
</dbReference>
<dbReference type="PIRSF" id="PIRSF001296">
    <property type="entry name" value="K_ATPase_KdpC"/>
    <property type="match status" value="1"/>
</dbReference>
<gene>
    <name evidence="1" type="primary">kdpC</name>
    <name type="ordered locus">BT9727_0649</name>
</gene>